<keyword id="KW-0025">Alternative splicing</keyword>
<keyword id="KW-1048">Host nucleus</keyword>
<keyword id="KW-0945">Host-virus interaction</keyword>
<keyword id="KW-0813">Transport</keyword>
<keyword id="KW-0946">Virion</keyword>
<name>NEP_INCJJ</name>
<organismHost>
    <name type="scientific">Homo sapiens</name>
    <name type="common">Human</name>
    <dbReference type="NCBI Taxonomy" id="9606"/>
</organismHost>
<organismHost>
    <name type="scientific">Sus scrofa</name>
    <name type="common">Pig</name>
    <dbReference type="NCBI Taxonomy" id="9823"/>
</organismHost>
<feature type="chain" id="PRO_0000079019" description="Nuclear export protein">
    <location>
        <begin position="1"/>
        <end position="122"/>
    </location>
</feature>
<feature type="short sequence motif" description="Nuclear export signal" evidence="1">
    <location>
        <begin position="96"/>
        <end position="105"/>
    </location>
</feature>
<feature type="non-terminal residue">
    <location>
        <position position="122"/>
    </location>
</feature>
<evidence type="ECO:0000250" key="1"/>
<evidence type="ECO:0000305" key="2"/>
<reference key="1">
    <citation type="journal article" date="1986" name="Virus Res.">
        <title>The influenza C virus NS gene: evidence for a spliced mRNA and a second NS gene product (NS2 protein).</title>
        <authorList>
            <person name="Nakada S."/>
            <person name="Graves P.N."/>
            <person name="Palese P."/>
        </authorList>
    </citation>
    <scope>NUCLEOTIDE SEQUENCE [GENOMIC RNA]</scope>
</reference>
<organism>
    <name type="scientific">Influenza C virus (strain C/JJ/1950)</name>
    <dbReference type="NCBI Taxonomy" id="11560"/>
    <lineage>
        <taxon>Viruses</taxon>
        <taxon>Riboviria</taxon>
        <taxon>Orthornavirae</taxon>
        <taxon>Negarnaviricota</taxon>
        <taxon>Polyploviricotina</taxon>
        <taxon>Insthoviricetes</taxon>
        <taxon>Articulavirales</taxon>
        <taxon>Orthomyxoviridae</taxon>
        <taxon>Gammainfluenzavirus</taxon>
        <taxon>Gammainfluenzavirus influenzae</taxon>
        <taxon>Influenza C virus</taxon>
    </lineage>
</organism>
<protein>
    <recommendedName>
        <fullName>Nuclear export protein</fullName>
        <shortName>NEP</shortName>
    </recommendedName>
    <alternativeName>
        <fullName>Non-structural protein 2</fullName>
        <shortName>NS2</shortName>
    </alternativeName>
</protein>
<proteinExistence type="inferred from homology"/>
<sequence>MSDKTVKSTNLMAFVATKMLERQEDLDTCTEMQVEKMKTSTKARLKTESSFAPRTWEDAIKDKILRRSVDTSSLDKWQELKQELENVSDALKADSLWLPMKSLSLYSKVSNQEPSSIPIGEM</sequence>
<comment type="function">
    <text evidence="1">Mediates the nuclear export of encapsidated genomic RNAs (ribonucleoproteins, RNPs). Acts as an adapter between viral RNPs complexes and the nuclear export machinery of the cell. Possesses no intrinsic RNA-binding activity, but includes a C-terminal M1-binding domain. This domain is believed to allow recognition of RNPs to which the M1 protein is bound. Because the M1 protein is not available in large quantities until the later stages of infection, such an indirect recognition mechanism probably ensures that genomic RNPs are not exported from the nucleus before sufficient quantities of viral mRNA and progeny genomic RNA have been synthesized. Furthermore, the RNPs enters the cytoplasm only when they have associated with the M1 protein that is necessary to guide them to the plasma membrane. May down-regulate viral RNA synthesis when overproduced (By similarity).</text>
</comment>
<comment type="subunit">
    <text evidence="1">Binds M1 protein. May interact with human nucleoporins and exportin XPO1/CRM1 (By similarity).</text>
</comment>
<comment type="subcellular location">
    <subcellularLocation>
        <location evidence="2">Virion</location>
    </subcellularLocation>
    <subcellularLocation>
        <location evidence="1">Host nucleus</location>
    </subcellularLocation>
</comment>
<comment type="alternative products">
    <event type="alternative splicing"/>
    <isoform>
        <id>P12603-1</id>
        <name>NEP</name>
        <name>NS2</name>
        <sequence type="displayed"/>
    </isoform>
    <isoform>
        <id>P12603-2</id>
        <name>NS1</name>
        <sequence type="not described"/>
    </isoform>
</comment>
<comment type="sequence caution" evidence="2">
    <conflict type="frameshift">
        <sequence resource="EMBL-CDS" id="AAA43796"/>
    </conflict>
</comment>
<dbReference type="EMBL" id="M22015">
    <property type="protein sequence ID" value="AAA43796.1"/>
    <property type="status" value="ALT_FRAME"/>
    <property type="molecule type" value="Genomic_RNA"/>
</dbReference>
<dbReference type="SMR" id="P12603"/>
<dbReference type="GO" id="GO:0042025">
    <property type="term" value="C:host cell nucleus"/>
    <property type="evidence" value="ECO:0007669"/>
    <property type="project" value="UniProtKB-SubCell"/>
</dbReference>
<dbReference type="GO" id="GO:0044423">
    <property type="term" value="C:virion component"/>
    <property type="evidence" value="ECO:0007669"/>
    <property type="project" value="UniProtKB-KW"/>
</dbReference>
<dbReference type="InterPro" id="IPR005188">
    <property type="entry name" value="Flu_C_NS2"/>
</dbReference>
<dbReference type="Pfam" id="PF03555">
    <property type="entry name" value="Flu_C_NS2"/>
    <property type="match status" value="1"/>
</dbReference>
<accession>P12603</accession>
<gene>
    <name type="primary">NS</name>
</gene>